<protein>
    <recommendedName>
        <fullName>Scinderin</fullName>
    </recommendedName>
    <alternativeName>
        <fullName>Adseverin</fullName>
    </alternativeName>
</protein>
<dbReference type="EMBL" id="DQ020143">
    <property type="status" value="NOT_ANNOTATED_CDS"/>
    <property type="molecule type" value="mRNA"/>
</dbReference>
<dbReference type="EMBL" id="AJ720675">
    <property type="protein sequence ID" value="CAG32334.1"/>
    <property type="status" value="ALT_SEQ"/>
    <property type="molecule type" value="mRNA"/>
</dbReference>
<dbReference type="RefSeq" id="NP_001231522.1">
    <property type="nucleotide sequence ID" value="NM_001244593.1"/>
</dbReference>
<dbReference type="SMR" id="Q5ZIV9"/>
<dbReference type="FunCoup" id="Q5ZIV9">
    <property type="interactions" value="50"/>
</dbReference>
<dbReference type="STRING" id="9031.ENSGALP00000017495"/>
<dbReference type="PaxDb" id="9031-ENSGALP00000017495"/>
<dbReference type="GeneID" id="420588"/>
<dbReference type="KEGG" id="gga:420588"/>
<dbReference type="CTD" id="85477"/>
<dbReference type="VEuPathDB" id="HostDB:geneid_420588"/>
<dbReference type="eggNOG" id="KOG0443">
    <property type="taxonomic scope" value="Eukaryota"/>
</dbReference>
<dbReference type="HOGENOM" id="CLU_002568_3_2_1"/>
<dbReference type="InParanoid" id="Q5ZIV9"/>
<dbReference type="OrthoDB" id="6375767at2759"/>
<dbReference type="PhylomeDB" id="Q5ZIV9"/>
<dbReference type="PRO" id="PR:Q5ZIV9"/>
<dbReference type="Proteomes" id="UP000000539">
    <property type="component" value="Unassembled WGS sequence"/>
</dbReference>
<dbReference type="GO" id="GO:0015629">
    <property type="term" value="C:actin cytoskeleton"/>
    <property type="evidence" value="ECO:0000318"/>
    <property type="project" value="GO_Central"/>
</dbReference>
<dbReference type="GO" id="GO:0070161">
    <property type="term" value="C:anchoring junction"/>
    <property type="evidence" value="ECO:0007669"/>
    <property type="project" value="UniProtKB-KW"/>
</dbReference>
<dbReference type="GO" id="GO:0042995">
    <property type="term" value="C:cell projection"/>
    <property type="evidence" value="ECO:0007669"/>
    <property type="project" value="UniProtKB-KW"/>
</dbReference>
<dbReference type="GO" id="GO:0005737">
    <property type="term" value="C:cytoplasm"/>
    <property type="evidence" value="ECO:0000318"/>
    <property type="project" value="GO_Central"/>
</dbReference>
<dbReference type="GO" id="GO:0002102">
    <property type="term" value="C:podosome"/>
    <property type="evidence" value="ECO:0007669"/>
    <property type="project" value="UniProtKB-SubCell"/>
</dbReference>
<dbReference type="GO" id="GO:0051015">
    <property type="term" value="F:actin filament binding"/>
    <property type="evidence" value="ECO:0000318"/>
    <property type="project" value="GO_Central"/>
</dbReference>
<dbReference type="GO" id="GO:0046872">
    <property type="term" value="F:metal ion binding"/>
    <property type="evidence" value="ECO:0007669"/>
    <property type="project" value="UniProtKB-KW"/>
</dbReference>
<dbReference type="GO" id="GO:0005546">
    <property type="term" value="F:phosphatidylinositol-4,5-bisphosphate binding"/>
    <property type="evidence" value="ECO:0000318"/>
    <property type="project" value="GO_Central"/>
</dbReference>
<dbReference type="GO" id="GO:0051014">
    <property type="term" value="P:actin filament severing"/>
    <property type="evidence" value="ECO:0000318"/>
    <property type="project" value="GO_Central"/>
</dbReference>
<dbReference type="GO" id="GO:0008154">
    <property type="term" value="P:actin polymerization or depolymerization"/>
    <property type="evidence" value="ECO:0000318"/>
    <property type="project" value="GO_Central"/>
</dbReference>
<dbReference type="GO" id="GO:0051016">
    <property type="term" value="P:barbed-end actin filament capping"/>
    <property type="evidence" value="ECO:0000318"/>
    <property type="project" value="GO_Central"/>
</dbReference>
<dbReference type="GO" id="GO:0030031">
    <property type="term" value="P:cell projection assembly"/>
    <property type="evidence" value="ECO:0000318"/>
    <property type="project" value="GO_Central"/>
</dbReference>
<dbReference type="GO" id="GO:0007417">
    <property type="term" value="P:central nervous system development"/>
    <property type="evidence" value="ECO:0000318"/>
    <property type="project" value="GO_Central"/>
</dbReference>
<dbReference type="GO" id="GO:0032330">
    <property type="term" value="P:regulation of chondrocyte differentiation"/>
    <property type="evidence" value="ECO:0000314"/>
    <property type="project" value="UniProtKB"/>
</dbReference>
<dbReference type="CDD" id="cd11290">
    <property type="entry name" value="gelsolin_S1_like"/>
    <property type="match status" value="1"/>
</dbReference>
<dbReference type="CDD" id="cd11289">
    <property type="entry name" value="gelsolin_S2_like"/>
    <property type="match status" value="1"/>
</dbReference>
<dbReference type="CDD" id="cd11292">
    <property type="entry name" value="gelsolin_S3_like"/>
    <property type="match status" value="1"/>
</dbReference>
<dbReference type="CDD" id="cd11293">
    <property type="entry name" value="gelsolin_S4_like"/>
    <property type="match status" value="1"/>
</dbReference>
<dbReference type="CDD" id="cd11288">
    <property type="entry name" value="gelsolin_S5_like"/>
    <property type="match status" value="1"/>
</dbReference>
<dbReference type="CDD" id="cd11291">
    <property type="entry name" value="gelsolin_S6_like"/>
    <property type="match status" value="1"/>
</dbReference>
<dbReference type="FunFam" id="3.40.20.10:FF:000001">
    <property type="entry name" value="Gelsolin"/>
    <property type="match status" value="1"/>
</dbReference>
<dbReference type="FunFam" id="3.40.20.10:FF:000002">
    <property type="entry name" value="Gelsolin"/>
    <property type="match status" value="1"/>
</dbReference>
<dbReference type="FunFam" id="3.40.20.10:FF:000004">
    <property type="entry name" value="Gelsolin"/>
    <property type="match status" value="1"/>
</dbReference>
<dbReference type="FunFam" id="3.40.20.10:FF:000005">
    <property type="entry name" value="Gelsolin"/>
    <property type="match status" value="1"/>
</dbReference>
<dbReference type="FunFam" id="3.40.20.10:FF:000009">
    <property type="entry name" value="gelsolin isoform X1"/>
    <property type="match status" value="1"/>
</dbReference>
<dbReference type="FunFam" id="3.40.20.10:FF:000008">
    <property type="entry name" value="gelsolin isoform X2"/>
    <property type="match status" value="1"/>
</dbReference>
<dbReference type="Gene3D" id="3.40.20.10">
    <property type="entry name" value="Severin"/>
    <property type="match status" value="6"/>
</dbReference>
<dbReference type="InterPro" id="IPR029006">
    <property type="entry name" value="ADF-H/Gelsolin-like_dom_sf"/>
</dbReference>
<dbReference type="InterPro" id="IPR007123">
    <property type="entry name" value="Gelsolin-like_dom"/>
</dbReference>
<dbReference type="InterPro" id="IPR036180">
    <property type="entry name" value="Gelsolin-like_dom_sf"/>
</dbReference>
<dbReference type="InterPro" id="IPR007122">
    <property type="entry name" value="Villin/Gelsolin"/>
</dbReference>
<dbReference type="PANTHER" id="PTHR11977:SF78">
    <property type="entry name" value="SCINDERIN"/>
    <property type="match status" value="1"/>
</dbReference>
<dbReference type="PANTHER" id="PTHR11977">
    <property type="entry name" value="VILLIN"/>
    <property type="match status" value="1"/>
</dbReference>
<dbReference type="Pfam" id="PF00626">
    <property type="entry name" value="Gelsolin"/>
    <property type="match status" value="6"/>
</dbReference>
<dbReference type="PRINTS" id="PR00597">
    <property type="entry name" value="GELSOLIN"/>
</dbReference>
<dbReference type="SMART" id="SM00262">
    <property type="entry name" value="GEL"/>
    <property type="match status" value="6"/>
</dbReference>
<dbReference type="SUPFAM" id="SSF55753">
    <property type="entry name" value="Actin depolymerizing proteins"/>
    <property type="match status" value="5"/>
</dbReference>
<dbReference type="SUPFAM" id="SSF82754">
    <property type="entry name" value="C-terminal, gelsolin-like domain of Sec23/24"/>
    <property type="match status" value="1"/>
</dbReference>
<accession>Q5ZIV9</accession>
<proteinExistence type="evidence at transcript level"/>
<evidence type="ECO:0000250" key="1"/>
<evidence type="ECO:0000250" key="2">
    <source>
        <dbReference type="UniProtKB" id="Q28046"/>
    </source>
</evidence>
<evidence type="ECO:0000250" key="3">
    <source>
        <dbReference type="UniProtKB" id="Q60604"/>
    </source>
</evidence>
<evidence type="ECO:0000250" key="4">
    <source>
        <dbReference type="UniProtKB" id="Q9Y6U3"/>
    </source>
</evidence>
<evidence type="ECO:0000269" key="5">
    <source>
    </source>
</evidence>
<evidence type="ECO:0000305" key="6"/>
<feature type="chain" id="PRO_0000404255" description="Scinderin">
    <location>
        <begin position="1"/>
        <end position="717"/>
    </location>
</feature>
<feature type="repeat" description="Gelsolin-like 1">
    <location>
        <begin position="28"/>
        <end position="108"/>
    </location>
</feature>
<feature type="repeat" description="Gelsolin-like 2">
    <location>
        <begin position="148"/>
        <end position="220"/>
    </location>
</feature>
<feature type="repeat" description="Gelsolin-like 3">
    <location>
        <begin position="265"/>
        <end position="340"/>
    </location>
</feature>
<feature type="repeat" description="Gelsolin-like 4">
    <location>
        <begin position="408"/>
        <end position="483"/>
    </location>
</feature>
<feature type="repeat" description="Gelsolin-like 5">
    <location>
        <begin position="526"/>
        <end position="590"/>
    </location>
</feature>
<feature type="repeat" description="Gelsolin-like 6">
    <location>
        <begin position="628"/>
        <end position="703"/>
    </location>
</feature>
<feature type="region of interest" description="Actin-severing" evidence="1">
    <location>
        <begin position="1"/>
        <end position="363"/>
    </location>
</feature>
<feature type="region of interest" description="Ca(2+)-dependent actin binding" evidence="1">
    <location>
        <begin position="364"/>
        <end position="715"/>
    </location>
</feature>
<feature type="binding site" evidence="1">
    <location>
        <begin position="112"/>
        <end position="119"/>
    </location>
    <ligand>
        <name>a 1,2-diacyl-sn-glycero-3-phospho-(1D-myo-inositol-4,5-bisphosphate)</name>
        <dbReference type="ChEBI" id="CHEBI:58456"/>
    </ligand>
</feature>
<feature type="binding site" evidence="1">
    <location>
        <begin position="138"/>
        <end position="146"/>
    </location>
    <ligand>
        <name>a 1,2-diacyl-sn-glycero-3-phospho-(1D-myo-inositol-4,5-bisphosphate)</name>
        <dbReference type="ChEBI" id="CHEBI:58456"/>
    </ligand>
</feature>
<feature type="binding site" evidence="4">
    <location>
        <position position="538"/>
    </location>
    <ligand>
        <name>Ca(2+)</name>
        <dbReference type="ChEBI" id="CHEBI:29108"/>
        <label>1</label>
    </ligand>
</feature>
<feature type="binding site" evidence="4">
    <location>
        <position position="539"/>
    </location>
    <ligand>
        <name>Ca(2+)</name>
        <dbReference type="ChEBI" id="CHEBI:29108"/>
        <label>1</label>
    </ligand>
</feature>
<feature type="binding site" evidence="4">
    <location>
        <position position="562"/>
    </location>
    <ligand>
        <name>Ca(2+)</name>
        <dbReference type="ChEBI" id="CHEBI:29108"/>
        <label>1</label>
    </ligand>
</feature>
<feature type="binding site" evidence="4">
    <location>
        <position position="643"/>
    </location>
    <ligand>
        <name>Ca(2+)</name>
        <dbReference type="ChEBI" id="CHEBI:29108"/>
        <label>2</label>
    </ligand>
</feature>
<feature type="binding site" evidence="4">
    <location>
        <position position="644"/>
    </location>
    <ligand>
        <name>Ca(2+)</name>
        <dbReference type="ChEBI" id="CHEBI:29108"/>
        <label>2</label>
    </ligand>
</feature>
<feature type="binding site" evidence="4">
    <location>
        <position position="666"/>
    </location>
    <ligand>
        <name>Ca(2+)</name>
        <dbReference type="ChEBI" id="CHEBI:29108"/>
        <label>2</label>
    </ligand>
</feature>
<feature type="sequence conflict" description="In Ref. 1; DQ020143." evidence="6" ref="1">
    <original>S</original>
    <variation>R</variation>
    <location>
        <position position="96"/>
    </location>
</feature>
<feature type="sequence conflict" description="In Ref. 2; CAG32334." evidence="6" ref="2">
    <original>E</original>
    <variation>K</variation>
    <location>
        <position position="212"/>
    </location>
</feature>
<feature type="sequence conflict" description="In Ref. 2; CAG32334." evidence="6" ref="2">
    <original>L</original>
    <variation>V</variation>
    <location>
        <position position="220"/>
    </location>
</feature>
<feature type="sequence conflict" description="In Ref. 1; DQ020143." evidence="6" ref="1">
    <original>MV</original>
    <variation>KA</variation>
    <location>
        <begin position="253"/>
        <end position="254"/>
    </location>
</feature>
<feature type="sequence conflict" description="In Ref. 1; DQ020143." evidence="6" ref="1">
    <original>N</original>
    <variation>D</variation>
    <location>
        <position position="536"/>
    </location>
</feature>
<feature type="sequence conflict" description="In Ref. 1; DQ020143." evidence="6" ref="1">
    <original>D</original>
    <variation>V</variation>
    <location>
        <position position="686"/>
    </location>
</feature>
<feature type="sequence conflict" description="In Ref. 1; DQ020143." evidence="6" ref="1">
    <original>N</original>
    <variation>T</variation>
    <location>
        <position position="713"/>
    </location>
</feature>
<name>SCIN_CHICK</name>
<reference key="1">
    <citation type="journal article" date="2007" name="Dev. Biol.">
        <title>Regulation of chondrocyte differentiation by actin-severing protein adseverin.</title>
        <authorList>
            <person name="Nurminsky D."/>
            <person name="Magee C."/>
            <person name="Faverman L."/>
            <person name="Nurminskaya M."/>
        </authorList>
    </citation>
    <scope>NUCLEOTIDE SEQUENCE [MRNA]</scope>
    <scope>FUNCTION</scope>
    <scope>DEVELOPMENTAL STAGE</scope>
    <scope>INDUCTION</scope>
</reference>
<reference key="2">
    <citation type="journal article" date="2005" name="Genome Biol.">
        <title>Full-length cDNAs from chicken bursal lymphocytes to facilitate gene function analysis.</title>
        <authorList>
            <person name="Caldwell R.B."/>
            <person name="Kierzek A.M."/>
            <person name="Arakawa H."/>
            <person name="Bezzubov Y."/>
            <person name="Zaim J."/>
            <person name="Fiedler P."/>
            <person name="Kutter S."/>
            <person name="Blagodatski A."/>
            <person name="Kostovska D."/>
            <person name="Koter M."/>
            <person name="Plachy J."/>
            <person name="Carninci P."/>
            <person name="Hayashizaki Y."/>
            <person name="Buerstedde J.-M."/>
        </authorList>
    </citation>
    <scope>NUCLEOTIDE SEQUENCE [LARGE SCALE MRNA]</scope>
    <source>
        <strain>CB</strain>
        <tissue>Bursa of Fabricius</tissue>
    </source>
</reference>
<gene>
    <name type="primary">SCIN</name>
    <name type="ORF">RCJMB04_23d8</name>
</gene>
<sequence>MAPERHPPAFEGAGQESGLQVWRVERLELVPVPPSRHGDFFVGDAYLVLHTVRRGAAVAYRLHYWLGKECTQDESTAAAIFTVQLDDYLGGKPVQSREIQGYESNEFVSYFKGGIKYKAGGVASGFNHVVTNDLSAQRLLHIKGRRVVRATEVPLTWASFNKGDCFIIDLGNEIYQWCGSSCNKYERLKATQVAVGIRDNERNGRSRLITVEEGSEPDELITVLGEKPELPECSDDDDEMADIANRKSAKLYMVSDASGSMKLSVVAEENPFSMAMLLSEECFILDNGAARKIFVWKGKDANPQERKAAMKNAETFVQQMNYPANTQIQVLPEGGETPIFKQFFKDWKDKDQSDGFGKVYVTERVAKIEQIEFDATKLHESPQMAAQHNMIDDGSGKVQIWRVESSGRVPVEPETYGQFYGGDCYIILYTYPKGQIIYTWQGACATKDELTASAFLTVQLDRSLNDQAVQIRVSQGKEPPHLLSLFKNKPLIVYKNGTSKKEGQKPAPPTRLFQIRRNLMSVTRIAEVDVDAMSLNSNDAFVLKLPNNTGYTWVGKGVNKEEEQGAQYIASVLKCQTAKINEGQEPEEFWKALGGKKKYQTSSQLLTKAEDHPPRLFGCSNKTGRFIIEEVPGEFTQDDLAEDDVMLLDAWEQVFVWIGKEANETERQESVKSAKRYIETDPSGRDKGTPIVIVKQGHEPPTFTGWFLAWDSNKWKN</sequence>
<comment type="function">
    <text evidence="2 3 4 5">Ca(2+)-dependent actin filament-severing protein that has a regulatory function in exocytosis by affecting the organization of the microfilament network underneath the plasma membrane. In vitro, also has barbed end capping and nucleating activities in the presence of Ca(2+). Severing activity is inhibited by phosphatidylinositol 4,5-bis-phosphate (PIP2) (By similarity). Required for megakaryocyte differentiation, maturation, polyploidization and apoptosis with the release of platelet-like particles (By similarity). Plays a role in osteoclastogenesis (OCG) and actin cytoskeletal organization in osteoclasts (By similarity). Regulates chondrocyte proliferation and differentiation (PubMed:17097081). Inhibits cell proliferation and tumorigenesis. Signaling is mediated by MAPK, p38 and JNK pathways (By similarity).</text>
</comment>
<comment type="subcellular location">
    <subcellularLocation>
        <location evidence="3">Cytoplasm</location>
        <location evidence="3">Cytoskeleton</location>
    </subcellularLocation>
    <subcellularLocation>
        <location evidence="3">Cell projection</location>
        <location evidence="3">Podosome</location>
    </subcellularLocation>
</comment>
<comment type="developmental stage">
    <text evidence="5">Expressed in the pre-hypertrophic and hypertrophic cartilage of the embryonic growth plate.</text>
</comment>
<comment type="induction">
    <text evidence="5">Up-regulated in pre-hypertrophic and hypertrophic chondrocytes during the embryonic development of long bones.</text>
</comment>
<comment type="similarity">
    <text evidence="6">Belongs to the villin/gelsolin family.</text>
</comment>
<comment type="sequence caution" evidence="6">
    <conflict type="erroneous termination">
        <sequence resource="EMBL-CDS" id="CAG32334"/>
    </conflict>
    <text>Truncated C-terminus.</text>
</comment>
<comment type="sequence caution" evidence="6">
    <conflict type="frameshift">
        <sequence resource="EMBL-CDS" id="CAG32334"/>
    </conflict>
</comment>
<organism>
    <name type="scientific">Gallus gallus</name>
    <name type="common">Chicken</name>
    <dbReference type="NCBI Taxonomy" id="9031"/>
    <lineage>
        <taxon>Eukaryota</taxon>
        <taxon>Metazoa</taxon>
        <taxon>Chordata</taxon>
        <taxon>Craniata</taxon>
        <taxon>Vertebrata</taxon>
        <taxon>Euteleostomi</taxon>
        <taxon>Archelosauria</taxon>
        <taxon>Archosauria</taxon>
        <taxon>Dinosauria</taxon>
        <taxon>Saurischia</taxon>
        <taxon>Theropoda</taxon>
        <taxon>Coelurosauria</taxon>
        <taxon>Aves</taxon>
        <taxon>Neognathae</taxon>
        <taxon>Galloanserae</taxon>
        <taxon>Galliformes</taxon>
        <taxon>Phasianidae</taxon>
        <taxon>Phasianinae</taxon>
        <taxon>Gallus</taxon>
    </lineage>
</organism>
<keyword id="KW-0117">Actin capping</keyword>
<keyword id="KW-0009">Actin-binding</keyword>
<keyword id="KW-0106">Calcium</keyword>
<keyword id="KW-0965">Cell junction</keyword>
<keyword id="KW-0966">Cell projection</keyword>
<keyword id="KW-0963">Cytoplasm</keyword>
<keyword id="KW-0206">Cytoskeleton</keyword>
<keyword id="KW-0479">Metal-binding</keyword>
<keyword id="KW-1185">Reference proteome</keyword>
<keyword id="KW-0677">Repeat</keyword>